<dbReference type="EMBL" id="AAEY01000028">
    <property type="protein sequence ID" value="EAL20594.1"/>
    <property type="molecule type" value="Genomic_DNA"/>
</dbReference>
<dbReference type="RefSeq" id="XP_775241.1">
    <property type="nucleotide sequence ID" value="XM_770148.1"/>
</dbReference>
<dbReference type="SMR" id="P0CO97"/>
<dbReference type="EnsemblFungi" id="AAW43735">
    <property type="protein sequence ID" value="AAW43735"/>
    <property type="gene ID" value="CNE05140"/>
</dbReference>
<dbReference type="GeneID" id="4936526"/>
<dbReference type="KEGG" id="cnb:CNBE5140"/>
<dbReference type="VEuPathDB" id="FungiDB:CNBE5140"/>
<dbReference type="HOGENOM" id="CLU_018539_4_1_1"/>
<dbReference type="OrthoDB" id="5821at5206"/>
<dbReference type="GO" id="GO:0035267">
    <property type="term" value="C:NuA4 histone acetyltransferase complex"/>
    <property type="evidence" value="ECO:0007669"/>
    <property type="project" value="InterPro"/>
</dbReference>
<dbReference type="GO" id="GO:0000812">
    <property type="term" value="C:Swr1 complex"/>
    <property type="evidence" value="ECO:0007669"/>
    <property type="project" value="TreeGrafter"/>
</dbReference>
<dbReference type="GO" id="GO:0003714">
    <property type="term" value="F:transcription corepressor activity"/>
    <property type="evidence" value="ECO:0007669"/>
    <property type="project" value="TreeGrafter"/>
</dbReference>
<dbReference type="GO" id="GO:0006338">
    <property type="term" value="P:chromatin remodeling"/>
    <property type="evidence" value="ECO:0007669"/>
    <property type="project" value="InterPro"/>
</dbReference>
<dbReference type="GO" id="GO:0006281">
    <property type="term" value="P:DNA repair"/>
    <property type="evidence" value="ECO:0007669"/>
    <property type="project" value="UniProtKB-KW"/>
</dbReference>
<dbReference type="GO" id="GO:0000122">
    <property type="term" value="P:negative regulation of transcription by RNA polymerase II"/>
    <property type="evidence" value="ECO:0007669"/>
    <property type="project" value="TreeGrafter"/>
</dbReference>
<dbReference type="FunFam" id="1.10.10.60:FF:000501">
    <property type="entry name" value="Unplaced genomic scaffold supercont1.172, whole genome shotgun sequence"/>
    <property type="match status" value="1"/>
</dbReference>
<dbReference type="Gene3D" id="1.10.10.60">
    <property type="entry name" value="Homeodomain-like"/>
    <property type="match status" value="1"/>
</dbReference>
<dbReference type="InterPro" id="IPR032563">
    <property type="entry name" value="DAMP1_SANT-like"/>
</dbReference>
<dbReference type="InterPro" id="IPR027109">
    <property type="entry name" value="Swc4/Dmap1"/>
</dbReference>
<dbReference type="PANTHER" id="PTHR12855:SF10">
    <property type="entry name" value="DNA METHYLTRANSFERASE 1-ASSOCIATED PROTEIN 1"/>
    <property type="match status" value="1"/>
</dbReference>
<dbReference type="PANTHER" id="PTHR12855">
    <property type="entry name" value="DNA METHYLTRANSFERASE 1-ASSOCIATED PROTEIN 1 FAMILY MEMBER"/>
    <property type="match status" value="1"/>
</dbReference>
<dbReference type="Pfam" id="PF16282">
    <property type="entry name" value="SANT_DAMP1_like"/>
    <property type="match status" value="1"/>
</dbReference>
<feature type="chain" id="PRO_0000410155" description="SWR1-complex protein 4">
    <location>
        <begin position="1"/>
        <end position="463"/>
    </location>
</feature>
<feature type="domain" description="SANT">
    <location>
        <begin position="130"/>
        <end position="189"/>
    </location>
</feature>
<feature type="region of interest" description="Disordered" evidence="2">
    <location>
        <begin position="1"/>
        <end position="32"/>
    </location>
</feature>
<feature type="region of interest" description="Disordered" evidence="2">
    <location>
        <begin position="285"/>
        <end position="359"/>
    </location>
</feature>
<feature type="compositionally biased region" description="Low complexity" evidence="2">
    <location>
        <begin position="10"/>
        <end position="24"/>
    </location>
</feature>
<feature type="compositionally biased region" description="Polar residues" evidence="2">
    <location>
        <begin position="330"/>
        <end position="341"/>
    </location>
</feature>
<organism>
    <name type="scientific">Cryptococcus neoformans var. neoformans serotype D (strain B-3501A)</name>
    <name type="common">Filobasidiella neoformans</name>
    <dbReference type="NCBI Taxonomy" id="283643"/>
    <lineage>
        <taxon>Eukaryota</taxon>
        <taxon>Fungi</taxon>
        <taxon>Dikarya</taxon>
        <taxon>Basidiomycota</taxon>
        <taxon>Agaricomycotina</taxon>
        <taxon>Tremellomycetes</taxon>
        <taxon>Tremellales</taxon>
        <taxon>Cryptococcaceae</taxon>
        <taxon>Cryptococcus</taxon>
        <taxon>Cryptococcus neoformans species complex</taxon>
    </lineage>
</organism>
<sequence length="463" mass="52154">MSAQDVRSILSLPPSTPLPTLSSSKKVPVPRKPDGITRELYALIGDNAPSLADAQASLAAVKYREKPALKGKKVHWEWTKFTPAARRDNPVRLGHWARITDSDPNDSVEYFGKFNLHGPSVMEYSQFEYDQHLVDPNWTLQETEYLFELLKEYDLRFIVAADRYAYVSPEGEKRKRSVEDMKDRYYTICRRLIRTRTASDPVHQQHLIQAYAFDKAREIKRKQYASDLFHLTPAEIAEEEALYVEITRMQQNERRFRADRDELMRSVMGLDSGLVEVDQSAMENAIGVDKNKKKRKAEDESAAPSPAPTPKKPAPNAGFDNSRCIYHLPTPSNANSLTSHLSQKHPPHQQAFLRGSRLPLPKPTAAGRITDLLAELGLSANRLVMPTRQNMEVFEGLLNAAAALVEMRRQVNRVEQELRVVRMQKEGLMPVTTNPSARVKGEAGVVTGGSEATVKAVTPVKEC</sequence>
<protein>
    <recommendedName>
        <fullName>SWR1-complex protein 4</fullName>
    </recommendedName>
</protein>
<accession>P0CO97</accession>
<accession>Q55RL7</accession>
<accession>Q5KG22</accession>
<keyword id="KW-0010">Activator</keyword>
<keyword id="KW-0156">Chromatin regulator</keyword>
<keyword id="KW-0227">DNA damage</keyword>
<keyword id="KW-0234">DNA repair</keyword>
<keyword id="KW-0539">Nucleus</keyword>
<keyword id="KW-0804">Transcription</keyword>
<keyword id="KW-0805">Transcription regulation</keyword>
<evidence type="ECO:0000250" key="1"/>
<evidence type="ECO:0000256" key="2">
    <source>
        <dbReference type="SAM" id="MobiDB-lite"/>
    </source>
</evidence>
<evidence type="ECO:0000305" key="3"/>
<comment type="function">
    <text evidence="1">Component of the SWR1 complex which mediates the ATP-dependent exchange of histone H2A for the H2A variant HZT1 leading to transcriptional regulation of selected genes by chromatin remodeling. Component of the NuA4 histone acetyltransferase complex which is involved in transcriptional activation of selected genes principally by acetylation of nucleosomal histone H4 and H2A. The NuA4 complex is also involved in DNA repair (By similarity).</text>
</comment>
<comment type="subunit">
    <text evidence="1">Component of the SWR1 chromatin-remodeling complex and of the NuA4 histone acetyltransferase complex.</text>
</comment>
<comment type="subcellular location">
    <subcellularLocation>
        <location evidence="1">Nucleus</location>
    </subcellularLocation>
</comment>
<comment type="similarity">
    <text evidence="3">Belongs to the SWC4 family.</text>
</comment>
<proteinExistence type="inferred from homology"/>
<gene>
    <name type="primary">SWC4</name>
    <name type="ordered locus">CNBE5140</name>
</gene>
<reference key="1">
    <citation type="journal article" date="2005" name="Science">
        <title>The genome of the basidiomycetous yeast and human pathogen Cryptococcus neoformans.</title>
        <authorList>
            <person name="Loftus B.J."/>
            <person name="Fung E."/>
            <person name="Roncaglia P."/>
            <person name="Rowley D."/>
            <person name="Amedeo P."/>
            <person name="Bruno D."/>
            <person name="Vamathevan J."/>
            <person name="Miranda M."/>
            <person name="Anderson I.J."/>
            <person name="Fraser J.A."/>
            <person name="Allen J.E."/>
            <person name="Bosdet I.E."/>
            <person name="Brent M.R."/>
            <person name="Chiu R."/>
            <person name="Doering T.L."/>
            <person name="Donlin M.J."/>
            <person name="D'Souza C.A."/>
            <person name="Fox D.S."/>
            <person name="Grinberg V."/>
            <person name="Fu J."/>
            <person name="Fukushima M."/>
            <person name="Haas B.J."/>
            <person name="Huang J.C."/>
            <person name="Janbon G."/>
            <person name="Jones S.J.M."/>
            <person name="Koo H.L."/>
            <person name="Krzywinski M.I."/>
            <person name="Kwon-Chung K.J."/>
            <person name="Lengeler K.B."/>
            <person name="Maiti R."/>
            <person name="Marra M.A."/>
            <person name="Marra R.E."/>
            <person name="Mathewson C.A."/>
            <person name="Mitchell T.G."/>
            <person name="Pertea M."/>
            <person name="Riggs F.R."/>
            <person name="Salzberg S.L."/>
            <person name="Schein J.E."/>
            <person name="Shvartsbeyn A."/>
            <person name="Shin H."/>
            <person name="Shumway M."/>
            <person name="Specht C.A."/>
            <person name="Suh B.B."/>
            <person name="Tenney A."/>
            <person name="Utterback T.R."/>
            <person name="Wickes B.L."/>
            <person name="Wortman J.R."/>
            <person name="Wye N.H."/>
            <person name="Kronstad J.W."/>
            <person name="Lodge J.K."/>
            <person name="Heitman J."/>
            <person name="Davis R.W."/>
            <person name="Fraser C.M."/>
            <person name="Hyman R.W."/>
        </authorList>
    </citation>
    <scope>NUCLEOTIDE SEQUENCE [LARGE SCALE GENOMIC DNA]</scope>
    <source>
        <strain>B-3501A</strain>
    </source>
</reference>
<name>SWC4_CRYNB</name>